<proteinExistence type="inferred from homology"/>
<accession>B0SQH7</accession>
<sequence>MITKEQKQQIIATFGSKPNDTGSAEVQIALLDSRIKDLTEHFKANKKDFHSRRGLIAMVNQRKSLLEYLKRSNLESYKKLIEKLGLRK</sequence>
<evidence type="ECO:0000255" key="1">
    <source>
        <dbReference type="HAMAP-Rule" id="MF_01343"/>
    </source>
</evidence>
<evidence type="ECO:0000305" key="2"/>
<comment type="function">
    <text evidence="1">One of the primary rRNA binding proteins, it binds directly to 16S rRNA where it helps nucleate assembly of the platform of the 30S subunit by binding and bridging several RNA helices of the 16S rRNA.</text>
</comment>
<comment type="function">
    <text evidence="1">Forms an intersubunit bridge (bridge B4) with the 23S rRNA of the 50S subunit in the ribosome.</text>
</comment>
<comment type="subunit">
    <text evidence="1">Part of the 30S ribosomal subunit. Forms a bridge to the 50S subunit in the 70S ribosome, contacting the 23S rRNA.</text>
</comment>
<comment type="similarity">
    <text evidence="1">Belongs to the universal ribosomal protein uS15 family.</text>
</comment>
<protein>
    <recommendedName>
        <fullName evidence="1">Small ribosomal subunit protein uS15</fullName>
    </recommendedName>
    <alternativeName>
        <fullName evidence="2">30S ribosomal protein S15</fullName>
    </alternativeName>
</protein>
<dbReference type="EMBL" id="CP000786">
    <property type="protein sequence ID" value="ABZ97635.1"/>
    <property type="molecule type" value="Genomic_DNA"/>
</dbReference>
<dbReference type="RefSeq" id="WP_012388514.1">
    <property type="nucleotide sequence ID" value="NC_010602.1"/>
</dbReference>
<dbReference type="SMR" id="B0SQH7"/>
<dbReference type="STRING" id="456481.LEPBI_I1528"/>
<dbReference type="GeneID" id="93341454"/>
<dbReference type="KEGG" id="lbi:LEPBI_I1528"/>
<dbReference type="HOGENOM" id="CLU_148518_0_0_12"/>
<dbReference type="OrthoDB" id="9799262at2"/>
<dbReference type="BioCyc" id="LBIF456481:LEPBI_RS07520-MONOMER"/>
<dbReference type="Proteomes" id="UP000001847">
    <property type="component" value="Chromosome I"/>
</dbReference>
<dbReference type="GO" id="GO:0022627">
    <property type="term" value="C:cytosolic small ribosomal subunit"/>
    <property type="evidence" value="ECO:0007669"/>
    <property type="project" value="TreeGrafter"/>
</dbReference>
<dbReference type="GO" id="GO:0019843">
    <property type="term" value="F:rRNA binding"/>
    <property type="evidence" value="ECO:0007669"/>
    <property type="project" value="UniProtKB-UniRule"/>
</dbReference>
<dbReference type="GO" id="GO:0003735">
    <property type="term" value="F:structural constituent of ribosome"/>
    <property type="evidence" value="ECO:0007669"/>
    <property type="project" value="InterPro"/>
</dbReference>
<dbReference type="GO" id="GO:0006412">
    <property type="term" value="P:translation"/>
    <property type="evidence" value="ECO:0007669"/>
    <property type="project" value="UniProtKB-UniRule"/>
</dbReference>
<dbReference type="CDD" id="cd00353">
    <property type="entry name" value="Ribosomal_S15p_S13e"/>
    <property type="match status" value="1"/>
</dbReference>
<dbReference type="FunFam" id="1.10.287.10:FF:000002">
    <property type="entry name" value="30S ribosomal protein S15"/>
    <property type="match status" value="1"/>
</dbReference>
<dbReference type="Gene3D" id="6.10.250.3130">
    <property type="match status" value="1"/>
</dbReference>
<dbReference type="Gene3D" id="1.10.287.10">
    <property type="entry name" value="S15/NS1, RNA-binding"/>
    <property type="match status" value="1"/>
</dbReference>
<dbReference type="HAMAP" id="MF_01343_B">
    <property type="entry name" value="Ribosomal_uS15_B"/>
    <property type="match status" value="1"/>
</dbReference>
<dbReference type="InterPro" id="IPR000589">
    <property type="entry name" value="Ribosomal_uS15"/>
</dbReference>
<dbReference type="InterPro" id="IPR005290">
    <property type="entry name" value="Ribosomal_uS15_bac-type"/>
</dbReference>
<dbReference type="InterPro" id="IPR009068">
    <property type="entry name" value="uS15_NS1_RNA-bd_sf"/>
</dbReference>
<dbReference type="NCBIfam" id="TIGR00952">
    <property type="entry name" value="S15_bact"/>
    <property type="match status" value="1"/>
</dbReference>
<dbReference type="PANTHER" id="PTHR23321">
    <property type="entry name" value="RIBOSOMAL PROTEIN S15, BACTERIAL AND ORGANELLAR"/>
    <property type="match status" value="1"/>
</dbReference>
<dbReference type="PANTHER" id="PTHR23321:SF26">
    <property type="entry name" value="SMALL RIBOSOMAL SUBUNIT PROTEIN US15M"/>
    <property type="match status" value="1"/>
</dbReference>
<dbReference type="Pfam" id="PF00312">
    <property type="entry name" value="Ribosomal_S15"/>
    <property type="match status" value="1"/>
</dbReference>
<dbReference type="SMART" id="SM01387">
    <property type="entry name" value="Ribosomal_S15"/>
    <property type="match status" value="1"/>
</dbReference>
<dbReference type="SUPFAM" id="SSF47060">
    <property type="entry name" value="S15/NS1 RNA-binding domain"/>
    <property type="match status" value="1"/>
</dbReference>
<dbReference type="PROSITE" id="PS00362">
    <property type="entry name" value="RIBOSOMAL_S15"/>
    <property type="match status" value="1"/>
</dbReference>
<name>RS15_LEPBP</name>
<feature type="chain" id="PRO_1000143135" description="Small ribosomal subunit protein uS15">
    <location>
        <begin position="1"/>
        <end position="88"/>
    </location>
</feature>
<keyword id="KW-1185">Reference proteome</keyword>
<keyword id="KW-0687">Ribonucleoprotein</keyword>
<keyword id="KW-0689">Ribosomal protein</keyword>
<keyword id="KW-0694">RNA-binding</keyword>
<keyword id="KW-0699">rRNA-binding</keyword>
<organism>
    <name type="scientific">Leptospira biflexa serovar Patoc (strain Patoc 1 / ATCC 23582 / Paris)</name>
    <dbReference type="NCBI Taxonomy" id="456481"/>
    <lineage>
        <taxon>Bacteria</taxon>
        <taxon>Pseudomonadati</taxon>
        <taxon>Spirochaetota</taxon>
        <taxon>Spirochaetia</taxon>
        <taxon>Leptospirales</taxon>
        <taxon>Leptospiraceae</taxon>
        <taxon>Leptospira</taxon>
    </lineage>
</organism>
<reference key="1">
    <citation type="journal article" date="2008" name="PLoS ONE">
        <title>Genome sequence of the saprophyte Leptospira biflexa provides insights into the evolution of Leptospira and the pathogenesis of leptospirosis.</title>
        <authorList>
            <person name="Picardeau M."/>
            <person name="Bulach D.M."/>
            <person name="Bouchier C."/>
            <person name="Zuerner R.L."/>
            <person name="Zidane N."/>
            <person name="Wilson P.J."/>
            <person name="Creno S."/>
            <person name="Kuczek E.S."/>
            <person name="Bommezzadri S."/>
            <person name="Davis J.C."/>
            <person name="McGrath A."/>
            <person name="Johnson M.J."/>
            <person name="Boursaux-Eude C."/>
            <person name="Seemann T."/>
            <person name="Rouy Z."/>
            <person name="Coppel R.L."/>
            <person name="Rood J.I."/>
            <person name="Lajus A."/>
            <person name="Davies J.K."/>
            <person name="Medigue C."/>
            <person name="Adler B."/>
        </authorList>
    </citation>
    <scope>NUCLEOTIDE SEQUENCE [LARGE SCALE GENOMIC DNA]</scope>
    <source>
        <strain>Patoc 1 / ATCC 23582 / Paris</strain>
    </source>
</reference>
<gene>
    <name evidence="1" type="primary">rpsO</name>
    <name type="ordered locus">LEPBI_I1528</name>
</gene>